<evidence type="ECO:0000255" key="1">
    <source>
        <dbReference type="PROSITE-ProRule" id="PRU01141"/>
    </source>
</evidence>
<evidence type="ECO:0000256" key="2">
    <source>
        <dbReference type="SAM" id="MobiDB-lite"/>
    </source>
</evidence>
<evidence type="ECO:0000269" key="3">
    <source>
    </source>
</evidence>
<evidence type="ECO:0000269" key="4">
    <source>
    </source>
</evidence>
<evidence type="ECO:0000303" key="5">
    <source>
    </source>
</evidence>
<evidence type="ECO:0000303" key="6">
    <source>
    </source>
</evidence>
<evidence type="ECO:0000305" key="7"/>
<evidence type="ECO:0000312" key="8">
    <source>
        <dbReference type="EMBL" id="AAM11358.1"/>
    </source>
</evidence>
<evidence type="ECO:0000312" key="9">
    <source>
        <dbReference type="FlyBase" id="FBgn0036826"/>
    </source>
</evidence>
<evidence type="ECO:0000312" key="10">
    <source>
        <dbReference type="Proteomes" id="UP000000803"/>
    </source>
</evidence>
<proteinExistence type="evidence at protein level"/>
<gene>
    <name evidence="9" type="primary">arx</name>
    <name evidence="5 6" type="synonym">Gtsf1</name>
    <name evidence="9" type="ORF">CG3893</name>
</gene>
<comment type="function">
    <text evidence="3 4">Acts via the piwi-interacting RNA (piRNA) pathway which mediates the repression of transposable elements during meiosis by forming complexes composed of piRNAs and piwi proteins and governs the methylation and subsequent repression of transposons. Required for repression of transposons and neighboring genes in ovarian somatic and germline cells.</text>
</comment>
<comment type="subunit">
    <text evidence="3 4">Interacts with piwi.</text>
</comment>
<comment type="subcellular location">
    <subcellularLocation>
        <location evidence="3 4">Nucleus</location>
    </subcellularLocation>
</comment>
<comment type="domain">
    <text evidence="3">The zinc fingers are required for transcriptional silencing activity.</text>
</comment>
<comment type="disruption phenotype">
    <text evidence="3 4">Mutant females are viable but sterile (PubMed:23913922). They have small and severely deformed ovaries (PubMed:23913921, PubMed:23913922). Soma- and germline-specific transposable elements are severely derepressed in the ovary (PubMed:23913922). Ovaries lack a follicle cell layer and show misexpression of orb (PubMed:23913921).</text>
</comment>
<comment type="similarity">
    <text evidence="7">Belongs to the UPF0224 (FAM112) family.</text>
</comment>
<protein>
    <recommendedName>
        <fullName evidence="7">Gametocyte-specific factor 1 homolog</fullName>
    </recommendedName>
    <alternativeName>
        <fullName evidence="9">Protein asterix</fullName>
    </alternativeName>
</protein>
<sequence length="167" mass="20076">MVYCPYNKEHKMLRKKLQQHILKCRVIYKDTVELMVCPFNSSHLIPEPQFFQHTQSCEDRNIIVHYQTSAPAVLSEDTRHAKIESEENWDDDESVPDYDPQVYCSRANIVREPNGLFPAQRRAFIEQEKRRHFGEDYEEEKKPRKAKARADLRPTPYEHRRPYSRRQ</sequence>
<organism evidence="8">
    <name type="scientific">Drosophila melanogaster</name>
    <name type="common">Fruit fly</name>
    <dbReference type="NCBI Taxonomy" id="7227"/>
    <lineage>
        <taxon>Eukaryota</taxon>
        <taxon>Metazoa</taxon>
        <taxon>Ecdysozoa</taxon>
        <taxon>Arthropoda</taxon>
        <taxon>Hexapoda</taxon>
        <taxon>Insecta</taxon>
        <taxon>Pterygota</taxon>
        <taxon>Neoptera</taxon>
        <taxon>Endopterygota</taxon>
        <taxon>Diptera</taxon>
        <taxon>Brachycera</taxon>
        <taxon>Muscomorpha</taxon>
        <taxon>Ephydroidea</taxon>
        <taxon>Drosophilidae</taxon>
        <taxon>Drosophila</taxon>
        <taxon>Sophophora</taxon>
    </lineage>
</organism>
<feature type="chain" id="PRO_0000435328" description="Gametocyte-specific factor 1 homolog">
    <location>
        <begin position="1"/>
        <end position="167"/>
    </location>
</feature>
<feature type="zinc finger region" description="CHHC U11-48K-type 1" evidence="1">
    <location>
        <begin position="1"/>
        <end position="28"/>
    </location>
</feature>
<feature type="zinc finger region" description="CHHC U11-48K-type 2" evidence="1">
    <location>
        <begin position="34"/>
        <end position="61"/>
    </location>
</feature>
<feature type="region of interest" description="Disordered" evidence="2">
    <location>
        <begin position="128"/>
        <end position="167"/>
    </location>
</feature>
<feature type="compositionally biased region" description="Basic and acidic residues" evidence="2">
    <location>
        <begin position="128"/>
        <end position="161"/>
    </location>
</feature>
<feature type="binding site" evidence="1">
    <location>
        <position position="4"/>
    </location>
    <ligand>
        <name>Zn(2+)</name>
        <dbReference type="ChEBI" id="CHEBI:29105"/>
        <label>1</label>
    </ligand>
</feature>
<feature type="binding site" evidence="1">
    <location>
        <position position="10"/>
    </location>
    <ligand>
        <name>Zn(2+)</name>
        <dbReference type="ChEBI" id="CHEBI:29105"/>
        <label>1</label>
    </ligand>
</feature>
<feature type="binding site" evidence="1">
    <location>
        <position position="20"/>
    </location>
    <ligand>
        <name>Zn(2+)</name>
        <dbReference type="ChEBI" id="CHEBI:29105"/>
        <label>1</label>
    </ligand>
</feature>
<feature type="binding site" evidence="1">
    <location>
        <position position="24"/>
    </location>
    <ligand>
        <name>Zn(2+)</name>
        <dbReference type="ChEBI" id="CHEBI:29105"/>
        <label>1</label>
    </ligand>
</feature>
<feature type="binding site" evidence="1">
    <location>
        <position position="37"/>
    </location>
    <ligand>
        <name>Zn(2+)</name>
        <dbReference type="ChEBI" id="CHEBI:29105"/>
        <label>2</label>
    </ligand>
</feature>
<feature type="binding site" evidence="1">
    <location>
        <position position="43"/>
    </location>
    <ligand>
        <name>Zn(2+)</name>
        <dbReference type="ChEBI" id="CHEBI:29105"/>
        <label>2</label>
    </ligand>
</feature>
<feature type="binding site" evidence="1">
    <location>
        <position position="53"/>
    </location>
    <ligand>
        <name>Zn(2+)</name>
        <dbReference type="ChEBI" id="CHEBI:29105"/>
        <label>2</label>
    </ligand>
</feature>
<feature type="binding site" evidence="1">
    <location>
        <position position="57"/>
    </location>
    <ligand>
        <name>Zn(2+)</name>
        <dbReference type="ChEBI" id="CHEBI:29105"/>
        <label>2</label>
    </ligand>
</feature>
<feature type="mutagenesis site" description="Decreased transposon silencing but no effect on nuclear localization or interaction with piwi." evidence="3">
    <original>C</original>
    <variation>A</variation>
    <location>
        <position position="4"/>
    </location>
</feature>
<feature type="mutagenesis site" description="Decreased transposon silencing but no effect on nuclear localization or interaction with piwi." evidence="3">
    <original>C</original>
    <variation>A</variation>
    <location>
        <position position="24"/>
    </location>
</feature>
<feature type="mutagenesis site" description="Decreased transposon silencing but no effect on nuclear localization or interaction with piwi." evidence="3">
    <original>C</original>
    <variation>A</variation>
    <location>
        <position position="37"/>
    </location>
</feature>
<feature type="mutagenesis site" description="Decreased transposon silencing but no effect on nuclear localization or interaction with piwi." evidence="3">
    <original>C</original>
    <variation>A</variation>
    <location>
        <position position="57"/>
    </location>
</feature>
<reference evidence="10" key="1">
    <citation type="journal article" date="2000" name="Science">
        <title>The genome sequence of Drosophila melanogaster.</title>
        <authorList>
            <person name="Adams M.D."/>
            <person name="Celniker S.E."/>
            <person name="Holt R.A."/>
            <person name="Evans C.A."/>
            <person name="Gocayne J.D."/>
            <person name="Amanatides P.G."/>
            <person name="Scherer S.E."/>
            <person name="Li P.W."/>
            <person name="Hoskins R.A."/>
            <person name="Galle R.F."/>
            <person name="George R.A."/>
            <person name="Lewis S.E."/>
            <person name="Richards S."/>
            <person name="Ashburner M."/>
            <person name="Henderson S.N."/>
            <person name="Sutton G.G."/>
            <person name="Wortman J.R."/>
            <person name="Yandell M.D."/>
            <person name="Zhang Q."/>
            <person name="Chen L.X."/>
            <person name="Brandon R.C."/>
            <person name="Rogers Y.-H.C."/>
            <person name="Blazej R.G."/>
            <person name="Champe M."/>
            <person name="Pfeiffer B.D."/>
            <person name="Wan K.H."/>
            <person name="Doyle C."/>
            <person name="Baxter E.G."/>
            <person name="Helt G."/>
            <person name="Nelson C.R."/>
            <person name="Miklos G.L.G."/>
            <person name="Abril J.F."/>
            <person name="Agbayani A."/>
            <person name="An H.-J."/>
            <person name="Andrews-Pfannkoch C."/>
            <person name="Baldwin D."/>
            <person name="Ballew R.M."/>
            <person name="Basu A."/>
            <person name="Baxendale J."/>
            <person name="Bayraktaroglu L."/>
            <person name="Beasley E.M."/>
            <person name="Beeson K.Y."/>
            <person name="Benos P.V."/>
            <person name="Berman B.P."/>
            <person name="Bhandari D."/>
            <person name="Bolshakov S."/>
            <person name="Borkova D."/>
            <person name="Botchan M.R."/>
            <person name="Bouck J."/>
            <person name="Brokstein P."/>
            <person name="Brottier P."/>
            <person name="Burtis K.C."/>
            <person name="Busam D.A."/>
            <person name="Butler H."/>
            <person name="Cadieu E."/>
            <person name="Center A."/>
            <person name="Chandra I."/>
            <person name="Cherry J.M."/>
            <person name="Cawley S."/>
            <person name="Dahlke C."/>
            <person name="Davenport L.B."/>
            <person name="Davies P."/>
            <person name="de Pablos B."/>
            <person name="Delcher A."/>
            <person name="Deng Z."/>
            <person name="Mays A.D."/>
            <person name="Dew I."/>
            <person name="Dietz S.M."/>
            <person name="Dodson K."/>
            <person name="Doup L.E."/>
            <person name="Downes M."/>
            <person name="Dugan-Rocha S."/>
            <person name="Dunkov B.C."/>
            <person name="Dunn P."/>
            <person name="Durbin K.J."/>
            <person name="Evangelista C.C."/>
            <person name="Ferraz C."/>
            <person name="Ferriera S."/>
            <person name="Fleischmann W."/>
            <person name="Fosler C."/>
            <person name="Gabrielian A.E."/>
            <person name="Garg N.S."/>
            <person name="Gelbart W.M."/>
            <person name="Glasser K."/>
            <person name="Glodek A."/>
            <person name="Gong F."/>
            <person name="Gorrell J.H."/>
            <person name="Gu Z."/>
            <person name="Guan P."/>
            <person name="Harris M."/>
            <person name="Harris N.L."/>
            <person name="Harvey D.A."/>
            <person name="Heiman T.J."/>
            <person name="Hernandez J.R."/>
            <person name="Houck J."/>
            <person name="Hostin D."/>
            <person name="Houston K.A."/>
            <person name="Howland T.J."/>
            <person name="Wei M.-H."/>
            <person name="Ibegwam C."/>
            <person name="Jalali M."/>
            <person name="Kalush F."/>
            <person name="Karpen G.H."/>
            <person name="Ke Z."/>
            <person name="Kennison J.A."/>
            <person name="Ketchum K.A."/>
            <person name="Kimmel B.E."/>
            <person name="Kodira C.D."/>
            <person name="Kraft C.L."/>
            <person name="Kravitz S."/>
            <person name="Kulp D."/>
            <person name="Lai Z."/>
            <person name="Lasko P."/>
            <person name="Lei Y."/>
            <person name="Levitsky A.A."/>
            <person name="Li J.H."/>
            <person name="Li Z."/>
            <person name="Liang Y."/>
            <person name="Lin X."/>
            <person name="Liu X."/>
            <person name="Mattei B."/>
            <person name="McIntosh T.C."/>
            <person name="McLeod M.P."/>
            <person name="McPherson D."/>
            <person name="Merkulov G."/>
            <person name="Milshina N.V."/>
            <person name="Mobarry C."/>
            <person name="Morris J."/>
            <person name="Moshrefi A."/>
            <person name="Mount S.M."/>
            <person name="Moy M."/>
            <person name="Murphy B."/>
            <person name="Murphy L."/>
            <person name="Muzny D.M."/>
            <person name="Nelson D.L."/>
            <person name="Nelson D.R."/>
            <person name="Nelson K.A."/>
            <person name="Nixon K."/>
            <person name="Nusskern D.R."/>
            <person name="Pacleb J.M."/>
            <person name="Palazzolo M."/>
            <person name="Pittman G.S."/>
            <person name="Pan S."/>
            <person name="Pollard J."/>
            <person name="Puri V."/>
            <person name="Reese M.G."/>
            <person name="Reinert K."/>
            <person name="Remington K."/>
            <person name="Saunders R.D.C."/>
            <person name="Scheeler F."/>
            <person name="Shen H."/>
            <person name="Shue B.C."/>
            <person name="Siden-Kiamos I."/>
            <person name="Simpson M."/>
            <person name="Skupski M.P."/>
            <person name="Smith T.J."/>
            <person name="Spier E."/>
            <person name="Spradling A.C."/>
            <person name="Stapleton M."/>
            <person name="Strong R."/>
            <person name="Sun E."/>
            <person name="Svirskas R."/>
            <person name="Tector C."/>
            <person name="Turner R."/>
            <person name="Venter E."/>
            <person name="Wang A.H."/>
            <person name="Wang X."/>
            <person name="Wang Z.-Y."/>
            <person name="Wassarman D.A."/>
            <person name="Weinstock G.M."/>
            <person name="Weissenbach J."/>
            <person name="Williams S.M."/>
            <person name="Woodage T."/>
            <person name="Worley K.C."/>
            <person name="Wu D."/>
            <person name="Yang S."/>
            <person name="Yao Q.A."/>
            <person name="Ye J."/>
            <person name="Yeh R.-F."/>
            <person name="Zaveri J.S."/>
            <person name="Zhan M."/>
            <person name="Zhang G."/>
            <person name="Zhao Q."/>
            <person name="Zheng L."/>
            <person name="Zheng X.H."/>
            <person name="Zhong F.N."/>
            <person name="Zhong W."/>
            <person name="Zhou X."/>
            <person name="Zhu S.C."/>
            <person name="Zhu X."/>
            <person name="Smith H.O."/>
            <person name="Gibbs R.A."/>
            <person name="Myers E.W."/>
            <person name="Rubin G.M."/>
            <person name="Venter J.C."/>
        </authorList>
    </citation>
    <scope>NUCLEOTIDE SEQUENCE [LARGE SCALE GENOMIC DNA]</scope>
    <source>
        <strain evidence="10">Berkeley</strain>
    </source>
</reference>
<reference evidence="10" key="2">
    <citation type="journal article" date="2002" name="Genome Biol.">
        <title>Annotation of the Drosophila melanogaster euchromatic genome: a systematic review.</title>
        <authorList>
            <person name="Misra S."/>
            <person name="Crosby M.A."/>
            <person name="Mungall C.J."/>
            <person name="Matthews B.B."/>
            <person name="Campbell K.S."/>
            <person name="Hradecky P."/>
            <person name="Huang Y."/>
            <person name="Kaminker J.S."/>
            <person name="Millburn G.H."/>
            <person name="Prochnik S.E."/>
            <person name="Smith C.D."/>
            <person name="Tupy J.L."/>
            <person name="Whitfield E.J."/>
            <person name="Bayraktaroglu L."/>
            <person name="Berman B.P."/>
            <person name="Bettencourt B.R."/>
            <person name="Celniker S.E."/>
            <person name="de Grey A.D.N.J."/>
            <person name="Drysdale R.A."/>
            <person name="Harris N.L."/>
            <person name="Richter J."/>
            <person name="Russo S."/>
            <person name="Schroeder A.J."/>
            <person name="Shu S.Q."/>
            <person name="Stapleton M."/>
            <person name="Yamada C."/>
            <person name="Ashburner M."/>
            <person name="Gelbart W.M."/>
            <person name="Rubin G.M."/>
            <person name="Lewis S.E."/>
        </authorList>
    </citation>
    <scope>GENOME REANNOTATION</scope>
    <source>
        <strain evidence="10">Berkeley</strain>
    </source>
</reference>
<reference evidence="8" key="3">
    <citation type="journal article" date="2002" name="Genome Biol.">
        <title>A Drosophila full-length cDNA resource.</title>
        <authorList>
            <person name="Stapleton M."/>
            <person name="Carlson J.W."/>
            <person name="Brokstein P."/>
            <person name="Yu C."/>
            <person name="Champe M."/>
            <person name="George R.A."/>
            <person name="Guarin H."/>
            <person name="Kronmiller B."/>
            <person name="Pacleb J.M."/>
            <person name="Park S."/>
            <person name="Wan K.H."/>
            <person name="Rubin G.M."/>
            <person name="Celniker S.E."/>
        </authorList>
    </citation>
    <scope>NUCLEOTIDE SEQUENCE [LARGE SCALE MRNA]</scope>
    <source>
        <strain evidence="8">Berkeley</strain>
        <tissue evidence="8">Embryo</tissue>
    </source>
</reference>
<reference evidence="7" key="4">
    <citation type="journal article" date="2013" name="Genes Dev.">
        <title>DmGTSF1 is necessary for Piwi-piRISC-mediated transcriptional transposon silencing in the Drosophila ovary.</title>
        <authorList>
            <person name="Ohtani H."/>
            <person name="Iwasaki Y.W."/>
            <person name="Shibuya A."/>
            <person name="Siomi H."/>
            <person name="Siomi M.C."/>
            <person name="Saito K."/>
        </authorList>
    </citation>
    <scope>FUNCTION</scope>
    <scope>INTERACTION WITH PIWI</scope>
    <scope>SUBCELLULAR LOCATION</scope>
    <scope>DOMAIN</scope>
    <scope>DISRUPTION PHENOTYPE</scope>
    <scope>MUTAGENESIS OF CYS-4; CYS-24; CYS-37 AND CYS-57</scope>
</reference>
<reference evidence="7" key="5">
    <citation type="journal article" date="2013" name="Genes Dev.">
        <title>Drosophila Gtsf1 is an essential component of the Piwi-mediated transcriptional silencing complex.</title>
        <authorList>
            <person name="Doenertas D."/>
            <person name="Sienski G."/>
            <person name="Brennecke J."/>
        </authorList>
    </citation>
    <scope>FUNCTION</scope>
    <scope>INTERACTION WITH PIWI</scope>
    <scope>SUBCELLULAR LOCATION</scope>
    <scope>DISRUPTION PHENOTYPE</scope>
    <scope>IDENTIFICATION BY MASS SPECTROMETRY</scope>
</reference>
<dbReference type="EMBL" id="AE014296">
    <property type="protein sequence ID" value="AAF49214.2"/>
    <property type="molecule type" value="Genomic_DNA"/>
</dbReference>
<dbReference type="EMBL" id="AY095030">
    <property type="protein sequence ID" value="AAM11358.1"/>
    <property type="molecule type" value="mRNA"/>
</dbReference>
<dbReference type="RefSeq" id="NP_649071.1">
    <property type="nucleotide sequence ID" value="NM_140814.2"/>
</dbReference>
<dbReference type="SMR" id="Q8SWX0"/>
<dbReference type="FunCoup" id="Q8SWX0">
    <property type="interactions" value="506"/>
</dbReference>
<dbReference type="STRING" id="7227.FBpp0074842"/>
<dbReference type="PaxDb" id="7227-FBpp0074842"/>
<dbReference type="DNASU" id="40061"/>
<dbReference type="EnsemblMetazoa" id="FBtr0075075">
    <property type="protein sequence ID" value="FBpp0074842"/>
    <property type="gene ID" value="FBgn0036826"/>
</dbReference>
<dbReference type="GeneID" id="40061"/>
<dbReference type="KEGG" id="dme:Dmel_CG3893"/>
<dbReference type="UCSC" id="CG3893-RA">
    <property type="organism name" value="d. melanogaster"/>
</dbReference>
<dbReference type="AGR" id="FB:FBgn0036826"/>
<dbReference type="CTD" id="170302"/>
<dbReference type="FlyBase" id="FBgn0036826">
    <property type="gene designation" value="arx"/>
</dbReference>
<dbReference type="VEuPathDB" id="VectorBase:FBgn0036826"/>
<dbReference type="eggNOG" id="KOG4376">
    <property type="taxonomic scope" value="Eukaryota"/>
</dbReference>
<dbReference type="GeneTree" id="ENSGT00940000164745"/>
<dbReference type="HOGENOM" id="CLU_105561_0_0_1"/>
<dbReference type="InParanoid" id="Q8SWX0"/>
<dbReference type="OMA" id="YNKEHKM"/>
<dbReference type="OrthoDB" id="10069248at2759"/>
<dbReference type="PhylomeDB" id="Q8SWX0"/>
<dbReference type="BioGRID-ORCS" id="40061">
    <property type="hits" value="0 hits in 3 CRISPR screens"/>
</dbReference>
<dbReference type="GenomeRNAi" id="40061"/>
<dbReference type="PRO" id="PR:Q8SWX0"/>
<dbReference type="Proteomes" id="UP000000803">
    <property type="component" value="Chromosome 3L"/>
</dbReference>
<dbReference type="Bgee" id="FBgn0036826">
    <property type="expression patterns" value="Expressed in adult abdomen and 57 other cell types or tissues"/>
</dbReference>
<dbReference type="GO" id="GO:0005634">
    <property type="term" value="C:nucleus"/>
    <property type="evidence" value="ECO:0000314"/>
    <property type="project" value="FlyBase"/>
</dbReference>
<dbReference type="GO" id="GO:0000049">
    <property type="term" value="F:tRNA binding"/>
    <property type="evidence" value="ECO:0000314"/>
    <property type="project" value="FlyBase"/>
</dbReference>
<dbReference type="GO" id="GO:0008270">
    <property type="term" value="F:zinc ion binding"/>
    <property type="evidence" value="ECO:0007669"/>
    <property type="project" value="UniProtKB-KW"/>
</dbReference>
<dbReference type="GO" id="GO:0045892">
    <property type="term" value="P:negative regulation of DNA-templated transcription"/>
    <property type="evidence" value="ECO:0000315"/>
    <property type="project" value="FlyBase"/>
</dbReference>
<dbReference type="GO" id="GO:0048477">
    <property type="term" value="P:oogenesis"/>
    <property type="evidence" value="ECO:0000315"/>
    <property type="project" value="FlyBase"/>
</dbReference>
<dbReference type="GO" id="GO:0031047">
    <property type="term" value="P:regulatory ncRNA-mediated gene silencing"/>
    <property type="evidence" value="ECO:0000315"/>
    <property type="project" value="FlyBase"/>
</dbReference>
<dbReference type="GO" id="GO:0141006">
    <property type="term" value="P:transposable element silencing by piRNA-mediated heterochromatin formation"/>
    <property type="evidence" value="ECO:0000316"/>
    <property type="project" value="FlyBase"/>
</dbReference>
<dbReference type="InterPro" id="IPR022776">
    <property type="entry name" value="TRM13/UPF0224_CHHC_Znf_dom"/>
</dbReference>
<dbReference type="InterPro" id="IPR051591">
    <property type="entry name" value="UPF0224_FAM112_RNA_Proc"/>
</dbReference>
<dbReference type="InterPro" id="IPR036236">
    <property type="entry name" value="Znf_C2H2_sf"/>
</dbReference>
<dbReference type="PANTHER" id="PTHR21402">
    <property type="entry name" value="GAMETOCYTE SPECIFIC FACTOR 1-RELATED"/>
    <property type="match status" value="1"/>
</dbReference>
<dbReference type="PANTHER" id="PTHR21402:SF14">
    <property type="entry name" value="GAMETOCYTE-SPECIFIC FACTOR 1 HOMOLOG"/>
    <property type="match status" value="1"/>
</dbReference>
<dbReference type="Pfam" id="PF05253">
    <property type="entry name" value="zf-U11-48K"/>
    <property type="match status" value="2"/>
</dbReference>
<dbReference type="SUPFAM" id="SSF57667">
    <property type="entry name" value="beta-beta-alpha zinc fingers"/>
    <property type="match status" value="2"/>
</dbReference>
<dbReference type="PROSITE" id="PS51800">
    <property type="entry name" value="ZF_CHHC_U11_48K"/>
    <property type="match status" value="2"/>
</dbReference>
<accession>Q8SWX0</accession>
<accession>Q9VVU3</accession>
<name>ASTRX_DROME</name>
<keyword id="KW-0479">Metal-binding</keyword>
<keyword id="KW-0539">Nucleus</keyword>
<keyword id="KW-1185">Reference proteome</keyword>
<keyword id="KW-0677">Repeat</keyword>
<keyword id="KW-0943">RNA-mediated gene silencing</keyword>
<keyword id="KW-0862">Zinc</keyword>
<keyword id="KW-0863">Zinc-finger</keyword>